<dbReference type="EC" id="2.3.1.199" evidence="5"/>
<dbReference type="EMBL" id="AL023094">
    <property type="protein sequence ID" value="CAA18830.1"/>
    <property type="molecule type" value="Genomic_DNA"/>
</dbReference>
<dbReference type="EMBL" id="AL161585">
    <property type="protein sequence ID" value="CAB80168.1"/>
    <property type="molecule type" value="Genomic_DNA"/>
</dbReference>
<dbReference type="EMBL" id="CP002687">
    <property type="protein sequence ID" value="AEE86387.1"/>
    <property type="molecule type" value="Genomic_DNA"/>
</dbReference>
<dbReference type="PIR" id="T05271">
    <property type="entry name" value="T05271"/>
</dbReference>
<dbReference type="RefSeq" id="NP_195177.1">
    <property type="nucleotide sequence ID" value="NM_119616.3"/>
</dbReference>
<dbReference type="SMR" id="O65677"/>
<dbReference type="FunCoup" id="O65677">
    <property type="interactions" value="202"/>
</dbReference>
<dbReference type="STRING" id="3702.O65677"/>
<dbReference type="ChEMBL" id="CHEMBL2242738"/>
<dbReference type="GlyGen" id="O65677">
    <property type="glycosylation" value="1 site"/>
</dbReference>
<dbReference type="PaxDb" id="3702-AT4G34510.1"/>
<dbReference type="ProteomicsDB" id="247269"/>
<dbReference type="EnsemblPlants" id="AT4G34510.1">
    <property type="protein sequence ID" value="AT4G34510.1"/>
    <property type="gene ID" value="AT4G34510"/>
</dbReference>
<dbReference type="GeneID" id="829602"/>
<dbReference type="Gramene" id="AT4G34510.1">
    <property type="protein sequence ID" value="AT4G34510.1"/>
    <property type="gene ID" value="AT4G34510"/>
</dbReference>
<dbReference type="KEGG" id="ath:AT4G34510"/>
<dbReference type="Araport" id="AT4G34510"/>
<dbReference type="TAIR" id="AT4G34510">
    <property type="gene designation" value="KCS17"/>
</dbReference>
<dbReference type="eggNOG" id="ENOG502QPKZ">
    <property type="taxonomic scope" value="Eukaryota"/>
</dbReference>
<dbReference type="HOGENOM" id="CLU_013238_2_1_1"/>
<dbReference type="InParanoid" id="O65677"/>
<dbReference type="OMA" id="EYCIHRY"/>
<dbReference type="PhylomeDB" id="O65677"/>
<dbReference type="BioCyc" id="ARA:AT4G34510-MONOMER"/>
<dbReference type="UniPathway" id="UPA00094"/>
<dbReference type="PRO" id="PR:O65677"/>
<dbReference type="Proteomes" id="UP000006548">
    <property type="component" value="Chromosome 4"/>
</dbReference>
<dbReference type="ExpressionAtlas" id="O65677">
    <property type="expression patterns" value="baseline and differential"/>
</dbReference>
<dbReference type="GO" id="GO:0016020">
    <property type="term" value="C:membrane"/>
    <property type="evidence" value="ECO:0007669"/>
    <property type="project" value="UniProtKB-SubCell"/>
</dbReference>
<dbReference type="GO" id="GO:0009922">
    <property type="term" value="F:fatty acid elongase activity"/>
    <property type="evidence" value="ECO:0007669"/>
    <property type="project" value="UniProtKB-EC"/>
</dbReference>
<dbReference type="GO" id="GO:0006633">
    <property type="term" value="P:fatty acid biosynthetic process"/>
    <property type="evidence" value="ECO:0007669"/>
    <property type="project" value="UniProtKB-UniPathway"/>
</dbReference>
<dbReference type="CDD" id="cd00831">
    <property type="entry name" value="CHS_like"/>
    <property type="match status" value="1"/>
</dbReference>
<dbReference type="FunFam" id="3.40.47.10:FF:000028">
    <property type="entry name" value="3-ketoacyl-CoA synthase"/>
    <property type="match status" value="1"/>
</dbReference>
<dbReference type="Gene3D" id="3.40.47.10">
    <property type="match status" value="1"/>
</dbReference>
<dbReference type="InterPro" id="IPR012392">
    <property type="entry name" value="3-ktacl-CoA_syn"/>
</dbReference>
<dbReference type="InterPro" id="IPR013747">
    <property type="entry name" value="ACP_syn_III_C"/>
</dbReference>
<dbReference type="InterPro" id="IPR013601">
    <property type="entry name" value="FAE1_typ3_polyketide_synth"/>
</dbReference>
<dbReference type="InterPro" id="IPR016039">
    <property type="entry name" value="Thiolase-like"/>
</dbReference>
<dbReference type="PANTHER" id="PTHR31561">
    <property type="entry name" value="3-KETOACYL-COA SYNTHASE"/>
    <property type="match status" value="1"/>
</dbReference>
<dbReference type="Pfam" id="PF08541">
    <property type="entry name" value="ACP_syn_III_C"/>
    <property type="match status" value="1"/>
</dbReference>
<dbReference type="Pfam" id="PF08392">
    <property type="entry name" value="FAE1_CUT1_RppA"/>
    <property type="match status" value="1"/>
</dbReference>
<dbReference type="PIRSF" id="PIRSF036417">
    <property type="entry name" value="3-ktacl-CoA_syn"/>
    <property type="match status" value="1"/>
</dbReference>
<dbReference type="SUPFAM" id="SSF53901">
    <property type="entry name" value="Thiolase-like"/>
    <property type="match status" value="2"/>
</dbReference>
<keyword id="KW-0012">Acyltransferase</keyword>
<keyword id="KW-0472">Membrane</keyword>
<keyword id="KW-0520">NAD</keyword>
<keyword id="KW-0521">NADP</keyword>
<keyword id="KW-1185">Reference proteome</keyword>
<keyword id="KW-0808">Transferase</keyword>
<keyword id="KW-0812">Transmembrane</keyword>
<keyword id="KW-1133">Transmembrane helix</keyword>
<gene>
    <name evidence="9" type="primary">KCS17</name>
    <name evidence="8" type="synonym">KCS2</name>
    <name evidence="11" type="ordered locus">At4g34510</name>
    <name evidence="12" type="ORF">T4L20.90</name>
</gene>
<name>KCS17_ARATH</name>
<organism>
    <name type="scientific">Arabidopsis thaliana</name>
    <name type="common">Mouse-ear cress</name>
    <dbReference type="NCBI Taxonomy" id="3702"/>
    <lineage>
        <taxon>Eukaryota</taxon>
        <taxon>Viridiplantae</taxon>
        <taxon>Streptophyta</taxon>
        <taxon>Embryophyta</taxon>
        <taxon>Tracheophyta</taxon>
        <taxon>Spermatophyta</taxon>
        <taxon>Magnoliopsida</taxon>
        <taxon>eudicotyledons</taxon>
        <taxon>Gunneridae</taxon>
        <taxon>Pentapetalae</taxon>
        <taxon>rosids</taxon>
        <taxon>malvids</taxon>
        <taxon>Brassicales</taxon>
        <taxon>Brassicaceae</taxon>
        <taxon>Camelineae</taxon>
        <taxon>Arabidopsis</taxon>
    </lineage>
</organism>
<comment type="function">
    <text evidence="4 5">Active on saturated acyl-CoAs up to C22. Mediates the synthesis of VLCFAs from 20 to 26 carbons in length (e.g. C20:1, C20, C24, C26).</text>
</comment>
<comment type="catalytic activity">
    <reaction evidence="5">
        <text>a very-long-chain acyl-CoA + malonyl-CoA + H(+) = a very-long-chain 3-oxoacyl-CoA + CO2 + CoA</text>
        <dbReference type="Rhea" id="RHEA:32727"/>
        <dbReference type="ChEBI" id="CHEBI:15378"/>
        <dbReference type="ChEBI" id="CHEBI:16526"/>
        <dbReference type="ChEBI" id="CHEBI:57287"/>
        <dbReference type="ChEBI" id="CHEBI:57384"/>
        <dbReference type="ChEBI" id="CHEBI:90725"/>
        <dbReference type="ChEBI" id="CHEBI:90736"/>
        <dbReference type="EC" id="2.3.1.199"/>
    </reaction>
</comment>
<comment type="activity regulation">
    <text evidence="4 7">Inhibited by K3 herbicides such as alachlor, allidochlor, anilofos, cafenstrole, fentrazamide and flufenacet (PubMed:15277688). Strongly inhibited by metazachlor (PubMed:22284369).</text>
</comment>
<comment type="pathway">
    <text>Lipid metabolism; fatty acid biosynthesis.</text>
</comment>
<comment type="subcellular location">
    <subcellularLocation>
        <location evidence="2">Membrane</location>
        <topology evidence="2">Multi-pass membrane protein</topology>
    </subcellularLocation>
</comment>
<comment type="tissue specificity">
    <text evidence="6">Expressed in flowers.</text>
</comment>
<comment type="induction">
    <text evidence="3">Repressed by herbicides such as flufenacet and benfuresate.</text>
</comment>
<comment type="similarity">
    <text evidence="10">Belongs to the thiolase-like superfamily. Chalcone/stilbene synthases family.</text>
</comment>
<evidence type="ECO:0000250" key="1">
    <source>
        <dbReference type="UniProtKB" id="Q38860"/>
    </source>
</evidence>
<evidence type="ECO:0000255" key="2"/>
<evidence type="ECO:0000269" key="3">
    <source>
    </source>
</evidence>
<evidence type="ECO:0000269" key="4">
    <source>
    </source>
</evidence>
<evidence type="ECO:0000269" key="5">
    <source>
    </source>
</evidence>
<evidence type="ECO:0000269" key="6">
    <source>
    </source>
</evidence>
<evidence type="ECO:0000269" key="7">
    <source>
    </source>
</evidence>
<evidence type="ECO:0000303" key="8">
    <source>
    </source>
</evidence>
<evidence type="ECO:0000303" key="9">
    <source>
    </source>
</evidence>
<evidence type="ECO:0000305" key="10"/>
<evidence type="ECO:0000312" key="11">
    <source>
        <dbReference type="Araport" id="AT4G34510"/>
    </source>
</evidence>
<evidence type="ECO:0000312" key="12">
    <source>
        <dbReference type="EMBL" id="CAA18830.1"/>
    </source>
</evidence>
<accession>O65677</accession>
<sequence>MDANGGPVQIRTQNYVKLGYHYLITHFFKLMFLPLMAVLFMNVSLLSLNHLQLYYNSTGFIFVITLAIVGSIVFFMSRPRSIYLLDYSCYLPPSSQKVSYQKFMNNSSLIQDFSETSLEFQRKILIRSGLGEETYLPDSIHSIPPRPTMAAAREEAEQVIFGALDNLFENTKINPREIGVLVVNCSLFNPTPSLSAMIVNKYKLRGNIKSFNLGGMGCSAGVIAVDLASDMLQIHRNTFALVVSTENITQNWYFGNKKAMLIPNCLFRVGGSAVLLSNKPLDRKRSKYKLVHTVRTHKGSDENAFNCVYQEQDECLKTGVSLSKDLMAIAGEALKTNITSLGPLVLPISEQILFFATFVAKRLFNDKKKKPYIPDFKLALDHFCIHAGGRAVIDELEKSLKLSPKHVEASRMTLHRFGNTSSSSIWYELAYTEAKGRMRKGNRVWQIAFGSGFKCNSAVWVALRNVEPSVNNPWEHCIHRYPVKIDL</sequence>
<reference key="1">
    <citation type="journal article" date="1999" name="Nature">
        <title>Sequence and analysis of chromosome 4 of the plant Arabidopsis thaliana.</title>
        <authorList>
            <person name="Mayer K.F.X."/>
            <person name="Schueller C."/>
            <person name="Wambutt R."/>
            <person name="Murphy G."/>
            <person name="Volckaert G."/>
            <person name="Pohl T."/>
            <person name="Duesterhoeft A."/>
            <person name="Stiekema W."/>
            <person name="Entian K.-D."/>
            <person name="Terryn N."/>
            <person name="Harris B."/>
            <person name="Ansorge W."/>
            <person name="Brandt P."/>
            <person name="Grivell L.A."/>
            <person name="Rieger M."/>
            <person name="Weichselgartner M."/>
            <person name="de Simone V."/>
            <person name="Obermaier B."/>
            <person name="Mache R."/>
            <person name="Mueller M."/>
            <person name="Kreis M."/>
            <person name="Delseny M."/>
            <person name="Puigdomenech P."/>
            <person name="Watson M."/>
            <person name="Schmidtheini T."/>
            <person name="Reichert B."/>
            <person name="Portetelle D."/>
            <person name="Perez-Alonso M."/>
            <person name="Boutry M."/>
            <person name="Bancroft I."/>
            <person name="Vos P."/>
            <person name="Hoheisel J."/>
            <person name="Zimmermann W."/>
            <person name="Wedler H."/>
            <person name="Ridley P."/>
            <person name="Langham S.-A."/>
            <person name="McCullagh B."/>
            <person name="Bilham L."/>
            <person name="Robben J."/>
            <person name="van der Schueren J."/>
            <person name="Grymonprez B."/>
            <person name="Chuang Y.-J."/>
            <person name="Vandenbussche F."/>
            <person name="Braeken M."/>
            <person name="Weltjens I."/>
            <person name="Voet M."/>
            <person name="Bastiaens I."/>
            <person name="Aert R."/>
            <person name="Defoor E."/>
            <person name="Weitzenegger T."/>
            <person name="Bothe G."/>
            <person name="Ramsperger U."/>
            <person name="Hilbert H."/>
            <person name="Braun M."/>
            <person name="Holzer E."/>
            <person name="Brandt A."/>
            <person name="Peters S."/>
            <person name="van Staveren M."/>
            <person name="Dirkse W."/>
            <person name="Mooijman P."/>
            <person name="Klein Lankhorst R."/>
            <person name="Rose M."/>
            <person name="Hauf J."/>
            <person name="Koetter P."/>
            <person name="Berneiser S."/>
            <person name="Hempel S."/>
            <person name="Feldpausch M."/>
            <person name="Lamberth S."/>
            <person name="Van den Daele H."/>
            <person name="De Keyser A."/>
            <person name="Buysshaert C."/>
            <person name="Gielen J."/>
            <person name="Villarroel R."/>
            <person name="De Clercq R."/>
            <person name="van Montagu M."/>
            <person name="Rogers J."/>
            <person name="Cronin A."/>
            <person name="Quail M.A."/>
            <person name="Bray-Allen S."/>
            <person name="Clark L."/>
            <person name="Doggett J."/>
            <person name="Hall S."/>
            <person name="Kay M."/>
            <person name="Lennard N."/>
            <person name="McLay K."/>
            <person name="Mayes R."/>
            <person name="Pettett A."/>
            <person name="Rajandream M.A."/>
            <person name="Lyne M."/>
            <person name="Benes V."/>
            <person name="Rechmann S."/>
            <person name="Borkova D."/>
            <person name="Bloecker H."/>
            <person name="Scharfe M."/>
            <person name="Grimm M."/>
            <person name="Loehnert T.-H."/>
            <person name="Dose S."/>
            <person name="de Haan M."/>
            <person name="Maarse A.C."/>
            <person name="Schaefer M."/>
            <person name="Mueller-Auer S."/>
            <person name="Gabel C."/>
            <person name="Fuchs M."/>
            <person name="Fartmann B."/>
            <person name="Granderath K."/>
            <person name="Dauner D."/>
            <person name="Herzl A."/>
            <person name="Neumann S."/>
            <person name="Argiriou A."/>
            <person name="Vitale D."/>
            <person name="Liguori R."/>
            <person name="Piravandi E."/>
            <person name="Massenet O."/>
            <person name="Quigley F."/>
            <person name="Clabauld G."/>
            <person name="Muendlein A."/>
            <person name="Felber R."/>
            <person name="Schnabl S."/>
            <person name="Hiller R."/>
            <person name="Schmidt W."/>
            <person name="Lecharny A."/>
            <person name="Aubourg S."/>
            <person name="Chefdor F."/>
            <person name="Cooke R."/>
            <person name="Berger C."/>
            <person name="Monfort A."/>
            <person name="Casacuberta E."/>
            <person name="Gibbons T."/>
            <person name="Weber N."/>
            <person name="Vandenbol M."/>
            <person name="Bargues M."/>
            <person name="Terol J."/>
            <person name="Torres A."/>
            <person name="Perez-Perez A."/>
            <person name="Purnelle B."/>
            <person name="Bent E."/>
            <person name="Johnson S."/>
            <person name="Tacon D."/>
            <person name="Jesse T."/>
            <person name="Heijnen L."/>
            <person name="Schwarz S."/>
            <person name="Scholler P."/>
            <person name="Heber S."/>
            <person name="Francs P."/>
            <person name="Bielke C."/>
            <person name="Frishman D."/>
            <person name="Haase D."/>
            <person name="Lemcke K."/>
            <person name="Mewes H.-W."/>
            <person name="Stocker S."/>
            <person name="Zaccaria P."/>
            <person name="Bevan M."/>
            <person name="Wilson R.K."/>
            <person name="de la Bastide M."/>
            <person name="Habermann K."/>
            <person name="Parnell L."/>
            <person name="Dedhia N."/>
            <person name="Gnoj L."/>
            <person name="Schutz K."/>
            <person name="Huang E."/>
            <person name="Spiegel L."/>
            <person name="Sekhon M."/>
            <person name="Murray J."/>
            <person name="Sheet P."/>
            <person name="Cordes M."/>
            <person name="Abu-Threideh J."/>
            <person name="Stoneking T."/>
            <person name="Kalicki J."/>
            <person name="Graves T."/>
            <person name="Harmon G."/>
            <person name="Edwards J."/>
            <person name="Latreille P."/>
            <person name="Courtney L."/>
            <person name="Cloud J."/>
            <person name="Abbott A."/>
            <person name="Scott K."/>
            <person name="Johnson D."/>
            <person name="Minx P."/>
            <person name="Bentley D."/>
            <person name="Fulton B."/>
            <person name="Miller N."/>
            <person name="Greco T."/>
            <person name="Kemp K."/>
            <person name="Kramer J."/>
            <person name="Fulton L."/>
            <person name="Mardis E."/>
            <person name="Dante M."/>
            <person name="Pepin K."/>
            <person name="Hillier L.W."/>
            <person name="Nelson J."/>
            <person name="Spieth J."/>
            <person name="Ryan E."/>
            <person name="Andrews S."/>
            <person name="Geisel C."/>
            <person name="Layman D."/>
            <person name="Du H."/>
            <person name="Ali J."/>
            <person name="Berghoff A."/>
            <person name="Jones K."/>
            <person name="Drone K."/>
            <person name="Cotton M."/>
            <person name="Joshu C."/>
            <person name="Antonoiu B."/>
            <person name="Zidanic M."/>
            <person name="Strong C."/>
            <person name="Sun H."/>
            <person name="Lamar B."/>
            <person name="Yordan C."/>
            <person name="Ma P."/>
            <person name="Zhong J."/>
            <person name="Preston R."/>
            <person name="Vil D."/>
            <person name="Shekher M."/>
            <person name="Matero A."/>
            <person name="Shah R."/>
            <person name="Swaby I.K."/>
            <person name="O'Shaughnessy A."/>
            <person name="Rodriguez M."/>
            <person name="Hoffman J."/>
            <person name="Till S."/>
            <person name="Granat S."/>
            <person name="Shohdy N."/>
            <person name="Hasegawa A."/>
            <person name="Hameed A."/>
            <person name="Lodhi M."/>
            <person name="Johnson A."/>
            <person name="Chen E."/>
            <person name="Marra M.A."/>
            <person name="Martienssen R."/>
            <person name="McCombie W.R."/>
        </authorList>
    </citation>
    <scope>NUCLEOTIDE SEQUENCE [LARGE SCALE GENOMIC DNA]</scope>
    <source>
        <strain>cv. Columbia</strain>
    </source>
</reference>
<reference key="2">
    <citation type="journal article" date="2017" name="Plant J.">
        <title>Araport11: a complete reannotation of the Arabidopsis thaliana reference genome.</title>
        <authorList>
            <person name="Cheng C.Y."/>
            <person name="Krishnakumar V."/>
            <person name="Chan A.P."/>
            <person name="Thibaud-Nissen F."/>
            <person name="Schobel S."/>
            <person name="Town C.D."/>
        </authorList>
    </citation>
    <scope>GENOME REANNOTATION</scope>
    <source>
        <strain>cv. Columbia</strain>
    </source>
</reference>
<reference key="3">
    <citation type="journal article" date="2003" name="Pest Manag. Sci.">
        <title>Flufenacet herbicide treatment phenocopies the fiddlehead mutant in Arabidopsis thaliana.</title>
        <authorList>
            <person name="Lechelt-Kunze C."/>
            <person name="Meissner R.C."/>
            <person name="Drewes M."/>
            <person name="Tietjen K."/>
        </authorList>
    </citation>
    <scope>INDUCTION</scope>
    <scope>GENE FAMILY</scope>
</reference>
<reference key="4">
    <citation type="journal article" date="2004" name="Proc. Natl. Acad. Sci. U.S.A.">
        <title>Specific and differential inhibition of very-long-chain fatty acid elongases from Arabidopsis thaliana by different herbicides.</title>
        <authorList>
            <person name="Trenkamp S."/>
            <person name="Martin W."/>
            <person name="Tietjen K."/>
        </authorList>
    </citation>
    <scope>FUNCTION</scope>
    <scope>ACTIVITY REGULATION</scope>
</reference>
<reference key="5">
    <citation type="journal article" date="2006" name="Biochem. Biophys. Res. Commun.">
        <title>Substrate specificity of Arabidopsis 3-ketoacyl-CoA synthases.</title>
        <authorList>
            <person name="Blacklock B.J."/>
            <person name="Jaworski J.G."/>
        </authorList>
    </citation>
    <scope>FUNCTION</scope>
    <scope>CATALYTIC ACTIVITY</scope>
    <scope>SUBSTRATE SPECIFICITY</scope>
</reference>
<reference key="6">
    <citation type="journal article" date="2008" name="Plant Mol. Biol.">
        <title>The VLCFA elongase gene family in Arabidopsis thaliana: phylogenetic analysis, 3D modelling and expression profiling.</title>
        <authorList>
            <person name="Joubes J."/>
            <person name="Raffaele S."/>
            <person name="Bourdenx B."/>
            <person name="Garcia C."/>
            <person name="Laroche-Traineau J."/>
            <person name="Moreau P."/>
            <person name="Domergue F."/>
            <person name="Lessire R."/>
        </authorList>
    </citation>
    <scope>GENE FAMILY</scope>
    <scope>NOMENCLATURE</scope>
    <scope>3D-STRUCTURE MODELING</scope>
    <scope>TISSUE SPECIFICITY</scope>
</reference>
<reference key="7">
    <citation type="journal article" date="2012" name="Phytochemistry">
        <title>Inhibition of saturated very-long-chain fatty acid biosynthesis by mefluidide and perfluidone, selective inhibitors of 3-ketoacyl-CoA synthases.</title>
        <authorList>
            <person name="Tresch S."/>
            <person name="Heilmann M."/>
            <person name="Christiansen N."/>
            <person name="Looser R."/>
            <person name="Grossmann K."/>
        </authorList>
    </citation>
    <scope>ACTIVITY REGULATION</scope>
</reference>
<feature type="chain" id="PRO_0000249094" description="3-ketoacyl-CoA synthase 17">
    <location>
        <begin position="1"/>
        <end position="487"/>
    </location>
</feature>
<feature type="transmembrane region" description="Helical" evidence="2">
    <location>
        <begin position="23"/>
        <end position="43"/>
    </location>
</feature>
<feature type="transmembrane region" description="Helical" evidence="2">
    <location>
        <begin position="57"/>
        <end position="77"/>
    </location>
</feature>
<feature type="domain" description="FAE" evidence="2">
    <location>
        <begin position="74"/>
        <end position="363"/>
    </location>
</feature>
<feature type="active site" evidence="1">
    <location>
        <position position="218"/>
    </location>
</feature>
<feature type="active site" evidence="1">
    <location>
        <position position="297"/>
    </location>
</feature>
<feature type="active site" evidence="1">
    <location>
        <position position="382"/>
    </location>
</feature>
<feature type="active site" evidence="1">
    <location>
        <position position="386"/>
    </location>
</feature>
<feature type="active site" evidence="1">
    <location>
        <position position="415"/>
    </location>
</feature>
<feature type="active site" evidence="1">
    <location>
        <position position="419"/>
    </location>
</feature>
<proteinExistence type="evidence at protein level"/>
<protein>
    <recommendedName>
        <fullName evidence="9">3-ketoacyl-CoA synthase 17</fullName>
        <shortName evidence="9">KCS-17</shortName>
        <ecNumber evidence="5">2.3.1.199</ecNumber>
    </recommendedName>
    <alternativeName>
        <fullName evidence="9">Very long-chain fatty acid condensing enzyme 17</fullName>
        <shortName evidence="9">VLCFA condensing enzyme 17</shortName>
    </alternativeName>
</protein>